<organismHost>
    <name type="scientific">Salmonella typhimurium</name>
    <dbReference type="NCBI Taxonomy" id="90371"/>
</organismHost>
<evidence type="ECO:0000256" key="1">
    <source>
        <dbReference type="SAM" id="MobiDB-lite"/>
    </source>
</evidence>
<evidence type="ECO:0000305" key="2"/>
<name>ERF_BPP22</name>
<accession>P04892</accession>
<accession>Q7PCG2</accession>
<protein>
    <recommendedName>
        <fullName>Essential recombination function protein</fullName>
    </recommendedName>
</protein>
<reference key="1">
    <citation type="journal article" date="1987" name="J. Mol. Biol.">
        <title>Localization of a DNA-binding determinant in the bacteriophage P22 Erf protein.</title>
        <authorList>
            <person name="Murphy K.C."/>
            <person name="Casey L."/>
            <person name="Yannoutsos N."/>
            <person name="Poteete A.R."/>
        </authorList>
    </citation>
    <scope>NUCLEOTIDE SEQUENCE [GENOMIC DNA]</scope>
</reference>
<reference key="2">
    <citation type="journal article" date="1982" name="Virology">
        <title>Location and sequence of the erf gene of phage P22.</title>
        <authorList>
            <person name="Poteete A.R."/>
        </authorList>
    </citation>
    <scope>NUCLEOTIDE SEQUENCE [GENOMIC DNA]</scope>
</reference>
<reference key="3">
    <citation type="journal article" date="2000" name="J. Bacteriol.">
        <title>Sequence of the genome of Salmonella bacteriophage P22.</title>
        <authorList>
            <person name="Vander Byl C.S."/>
            <person name="Kropinski A.M.B."/>
        </authorList>
    </citation>
    <scope>NUCLEOTIDE SEQUENCE [LARGE SCALE GENOMIC DNA]</scope>
</reference>
<reference key="4">
    <citation type="journal article" date="2003" name="J. Bacteriol.">
        <title>Corrected sequence of the bacteriophage P22 genome.</title>
        <authorList>
            <person name="Pedulla M.L."/>
            <person name="Ford M.E."/>
            <person name="Karthikeyan T."/>
            <person name="Houtz J.M."/>
            <person name="Hendrix R.W."/>
            <person name="Hatfull G.F."/>
            <person name="Poteete A.R."/>
            <person name="Gilcrease E.B."/>
            <person name="Winn-Stapley D.A."/>
            <person name="Casjens S.R."/>
        </authorList>
    </citation>
    <scope>NUCLEOTIDE SEQUENCE [LARGE SCALE GENOMIC DNA]</scope>
</reference>
<reference key="5">
    <citation type="journal article" date="1989" name="J. Mol. Biol.">
        <title>Genetic structure of the bacteriophage P22 PL operon.</title>
        <authorList>
            <person name="Semerjian A.V."/>
            <person name="Malloy D.C."/>
            <person name="Poteete A.R."/>
        </authorList>
    </citation>
    <scope>NUCLEOTIDE SEQUENCE [GENOMIC DNA] OF 1-2</scope>
</reference>
<comment type="function">
    <text>Promotes homologous recombination. Essential for P22 growth in a recA, but not a wild-type, host.</text>
</comment>
<comment type="similarity">
    <text evidence="2">To phage H-19B erf.</text>
</comment>
<sequence>MSKEFYARLAEIQEHLNAPKNQYNSFGKYKYRSCEDILEGVKPLLKGLFLSISDEIVLIGDRYYVKATATITDGENSHSASAIAREEENKKGMDAAQVTGATSSYARKYCLNGLFGIDDAKDADTEEHKQQQNAAPAKQTKSSPSSPAPEQVLKAFSEYAATETDKKKLIERYQHDWQLLTGHDDEQTKCVQVMNIRINELKQVA</sequence>
<feature type="chain" id="PRO_0000077733" description="Essential recombination function protein">
    <location>
        <begin position="1"/>
        <end position="205"/>
    </location>
</feature>
<feature type="region of interest" description="Disordered" evidence="1">
    <location>
        <begin position="124"/>
        <end position="150"/>
    </location>
</feature>
<feature type="compositionally biased region" description="Polar residues" evidence="1">
    <location>
        <begin position="131"/>
        <end position="145"/>
    </location>
</feature>
<feature type="sequence conflict" description="In Ref. 1; CAA28884." evidence="2" ref="1">
    <original>G</original>
    <variation>V</variation>
    <location>
        <position position="27"/>
    </location>
</feature>
<dbReference type="EMBL" id="J02471">
    <property type="protein sequence ID" value="AAA88343.1"/>
    <property type="molecule type" value="Genomic_DNA"/>
</dbReference>
<dbReference type="EMBL" id="V01152">
    <property type="protein sequence ID" value="CAA24469.1"/>
    <property type="molecule type" value="Genomic_DNA"/>
</dbReference>
<dbReference type="EMBL" id="X05268">
    <property type="protein sequence ID" value="CAA28884.1"/>
    <property type="molecule type" value="Genomic_DNA"/>
</dbReference>
<dbReference type="EMBL" id="AF217253">
    <property type="protein sequence ID" value="AAF75014.1"/>
    <property type="molecule type" value="Genomic_DNA"/>
</dbReference>
<dbReference type="EMBL" id="X15637">
    <property type="protein sequence ID" value="CAA33653.1"/>
    <property type="molecule type" value="Genomic_DNA"/>
</dbReference>
<dbReference type="EMBL" id="BK000583">
    <property type="protein sequence ID" value="DAA01011.1"/>
    <property type="molecule type" value="Genomic_DNA"/>
</dbReference>
<dbReference type="PIR" id="S07283">
    <property type="entry name" value="S07283"/>
</dbReference>
<dbReference type="RefSeq" id="NP_059596.1">
    <property type="nucleotide sequence ID" value="NC_002371.2"/>
</dbReference>
<dbReference type="GeneID" id="1262800"/>
<dbReference type="KEGG" id="vg:1262800"/>
<dbReference type="OrthoDB" id="8480at10239"/>
<dbReference type="Proteomes" id="UP000001795">
    <property type="component" value="Segment"/>
</dbReference>
<dbReference type="Proteomes" id="UP000007960">
    <property type="component" value="Segment"/>
</dbReference>
<dbReference type="GO" id="GO:0003677">
    <property type="term" value="F:DNA binding"/>
    <property type="evidence" value="ECO:0007669"/>
    <property type="project" value="UniProtKB-KW"/>
</dbReference>
<dbReference type="InterPro" id="IPR007499">
    <property type="entry name" value="ERF_bacteria_virus"/>
</dbReference>
<dbReference type="Pfam" id="PF04404">
    <property type="entry name" value="ERF"/>
    <property type="match status" value="1"/>
</dbReference>
<proteinExistence type="predicted"/>
<keyword id="KW-0238">DNA-binding</keyword>
<keyword id="KW-0244">Early protein</keyword>
<keyword id="KW-1185">Reference proteome</keyword>
<organism>
    <name type="scientific">Salmonella phage P22</name>
    <name type="common">Bacteriophage P22</name>
    <dbReference type="NCBI Taxonomy" id="10754"/>
    <lineage>
        <taxon>Viruses</taxon>
        <taxon>Duplodnaviria</taxon>
        <taxon>Heunggongvirae</taxon>
        <taxon>Uroviricota</taxon>
        <taxon>Caudoviricetes</taxon>
        <taxon>Lederbergvirus</taxon>
    </lineage>
</organism>
<gene>
    <name type="primary">erf</name>
</gene>